<dbReference type="EMBL" id="AF283983">
    <property type="protein sequence ID" value="AAG13398.1"/>
    <property type="molecule type" value="Genomic_DNA"/>
</dbReference>
<dbReference type="EMBL" id="BX284605">
    <property type="protein sequence ID" value="CCD72926.1"/>
    <property type="molecule type" value="Genomic_DNA"/>
</dbReference>
<dbReference type="PIR" id="T29719">
    <property type="entry name" value="T29719"/>
</dbReference>
<dbReference type="RefSeq" id="NP_504694.1">
    <property type="nucleotide sequence ID" value="NM_072293.7"/>
</dbReference>
<dbReference type="SMR" id="G5EFY4"/>
<dbReference type="FunCoup" id="G5EFY4">
    <property type="interactions" value="10"/>
</dbReference>
<dbReference type="STRING" id="6239.K11G9.4.1"/>
<dbReference type="PaxDb" id="6239-K11G9.4"/>
<dbReference type="EnsemblMetazoa" id="K11G9.4.1">
    <property type="protein sequence ID" value="K11G9.4.1"/>
    <property type="gene ID" value="WBGene00001210"/>
</dbReference>
<dbReference type="GeneID" id="179058"/>
<dbReference type="KEGG" id="cel:CELE_K11G9.4"/>
<dbReference type="AGR" id="WB:WBGene00001210"/>
<dbReference type="CTD" id="179058"/>
<dbReference type="WormBase" id="K11G9.4">
    <property type="protein sequence ID" value="CE07377"/>
    <property type="gene ID" value="WBGene00001210"/>
    <property type="gene designation" value="egl-46"/>
</dbReference>
<dbReference type="eggNOG" id="KOG3993">
    <property type="taxonomic scope" value="Eukaryota"/>
</dbReference>
<dbReference type="GeneTree" id="ENSGT00940000170254"/>
<dbReference type="HOGENOM" id="CLU_085484_0_0_1"/>
<dbReference type="InParanoid" id="G5EFY4"/>
<dbReference type="OMA" id="HKCPRIA"/>
<dbReference type="OrthoDB" id="8953942at2759"/>
<dbReference type="PhylomeDB" id="G5EFY4"/>
<dbReference type="PRO" id="PR:G5EFY4"/>
<dbReference type="Proteomes" id="UP000001940">
    <property type="component" value="Chromosome V"/>
</dbReference>
<dbReference type="Bgee" id="WBGene00001210">
    <property type="expression patterns" value="Expressed in pharyngeal muscle cell (C elegans) and 3 other cell types or tissues"/>
</dbReference>
<dbReference type="GO" id="GO:0005634">
    <property type="term" value="C:nucleus"/>
    <property type="evidence" value="ECO:0000314"/>
    <property type="project" value="WormBase"/>
</dbReference>
<dbReference type="GO" id="GO:0017053">
    <property type="term" value="C:transcription repressor complex"/>
    <property type="evidence" value="ECO:0000318"/>
    <property type="project" value="GO_Central"/>
</dbReference>
<dbReference type="GO" id="GO:0000981">
    <property type="term" value="F:DNA-binding transcription factor activity, RNA polymerase II-specific"/>
    <property type="evidence" value="ECO:0000250"/>
    <property type="project" value="WormBase"/>
</dbReference>
<dbReference type="GO" id="GO:0001227">
    <property type="term" value="F:DNA-binding transcription repressor activity, RNA polymerase II-specific"/>
    <property type="evidence" value="ECO:0000318"/>
    <property type="project" value="GO_Central"/>
</dbReference>
<dbReference type="GO" id="GO:0000978">
    <property type="term" value="F:RNA polymerase II cis-regulatory region sequence-specific DNA binding"/>
    <property type="evidence" value="ECO:0000318"/>
    <property type="project" value="GO_Central"/>
</dbReference>
<dbReference type="GO" id="GO:0061629">
    <property type="term" value="F:RNA polymerase II-specific DNA-binding transcription factor binding"/>
    <property type="evidence" value="ECO:0000353"/>
    <property type="project" value="UniProtKB"/>
</dbReference>
<dbReference type="GO" id="GO:0008270">
    <property type="term" value="F:zinc ion binding"/>
    <property type="evidence" value="ECO:0007669"/>
    <property type="project" value="UniProtKB-KW"/>
</dbReference>
<dbReference type="GO" id="GO:0007411">
    <property type="term" value="P:axon guidance"/>
    <property type="evidence" value="ECO:0000315"/>
    <property type="project" value="WormBase"/>
</dbReference>
<dbReference type="GO" id="GO:0045165">
    <property type="term" value="P:cell fate commitment"/>
    <property type="evidence" value="ECO:0000315"/>
    <property type="project" value="WormBase"/>
</dbReference>
<dbReference type="GO" id="GO:0003031">
    <property type="term" value="P:detection of carbon dioxide"/>
    <property type="evidence" value="ECO:0000315"/>
    <property type="project" value="UniProtKB"/>
</dbReference>
<dbReference type="GO" id="GO:0003032">
    <property type="term" value="P:detection of oxygen"/>
    <property type="evidence" value="ECO:0000315"/>
    <property type="project" value="UniProtKB"/>
</dbReference>
<dbReference type="GO" id="GO:0060179">
    <property type="term" value="P:male mating behavior"/>
    <property type="evidence" value="ECO:0000315"/>
    <property type="project" value="UniProtKB"/>
</dbReference>
<dbReference type="GO" id="GO:0000122">
    <property type="term" value="P:negative regulation of transcription by RNA polymerase II"/>
    <property type="evidence" value="ECO:0000315"/>
    <property type="project" value="UniProtKB"/>
</dbReference>
<dbReference type="GO" id="GO:0055057">
    <property type="term" value="P:neuroblast division"/>
    <property type="evidence" value="ECO:0000315"/>
    <property type="project" value="WormBase"/>
</dbReference>
<dbReference type="GO" id="GO:0030182">
    <property type="term" value="P:neuron differentiation"/>
    <property type="evidence" value="ECO:0000315"/>
    <property type="project" value="UniProtKB"/>
</dbReference>
<dbReference type="GO" id="GO:0048665">
    <property type="term" value="P:neuron fate specification"/>
    <property type="evidence" value="ECO:0000315"/>
    <property type="project" value="UniProtKB"/>
</dbReference>
<dbReference type="GO" id="GO:0001764">
    <property type="term" value="P:neuron migration"/>
    <property type="evidence" value="ECO:0000315"/>
    <property type="project" value="WormBase"/>
</dbReference>
<dbReference type="GO" id="GO:0106027">
    <property type="term" value="P:neuron projection organization"/>
    <property type="evidence" value="ECO:0000316"/>
    <property type="project" value="UniProtKB"/>
</dbReference>
<dbReference type="GO" id="GO:0031536">
    <property type="term" value="P:positive regulation of exit from mitosis"/>
    <property type="evidence" value="ECO:0000315"/>
    <property type="project" value="UniProtKB"/>
</dbReference>
<dbReference type="GO" id="GO:0010564">
    <property type="term" value="P:regulation of cell cycle process"/>
    <property type="evidence" value="ECO:0000318"/>
    <property type="project" value="GO_Central"/>
</dbReference>
<dbReference type="GO" id="GO:0006355">
    <property type="term" value="P:regulation of DNA-templated transcription"/>
    <property type="evidence" value="ECO:0000315"/>
    <property type="project" value="UniProtKB"/>
</dbReference>
<dbReference type="GO" id="GO:0010468">
    <property type="term" value="P:regulation of gene expression"/>
    <property type="evidence" value="ECO:0000315"/>
    <property type="project" value="UniProtKB"/>
</dbReference>
<dbReference type="FunFam" id="3.30.160.60:FF:003986">
    <property type="entry name" value="C2H2 zinc finger protein EGL-46"/>
    <property type="match status" value="1"/>
</dbReference>
<dbReference type="Gene3D" id="3.30.160.60">
    <property type="entry name" value="Classic Zinc Finger"/>
    <property type="match status" value="1"/>
</dbReference>
<dbReference type="InterPro" id="IPR042972">
    <property type="entry name" value="INSM1/2"/>
</dbReference>
<dbReference type="InterPro" id="IPR036236">
    <property type="entry name" value="Znf_C2H2_sf"/>
</dbReference>
<dbReference type="InterPro" id="IPR013087">
    <property type="entry name" value="Znf_C2H2_type"/>
</dbReference>
<dbReference type="PANTHER" id="PTHR15065">
    <property type="entry name" value="INSULINOMA-ASSOCIATED 1"/>
    <property type="match status" value="1"/>
</dbReference>
<dbReference type="PANTHER" id="PTHR15065:SF4">
    <property type="entry name" value="LD18634P"/>
    <property type="match status" value="1"/>
</dbReference>
<dbReference type="SUPFAM" id="SSF57667">
    <property type="entry name" value="beta-beta-alpha zinc fingers"/>
    <property type="match status" value="1"/>
</dbReference>
<dbReference type="PROSITE" id="PS00028">
    <property type="entry name" value="ZINC_FINGER_C2H2_1"/>
    <property type="match status" value="1"/>
</dbReference>
<dbReference type="PROSITE" id="PS50157">
    <property type="entry name" value="ZINC_FINGER_C2H2_2"/>
    <property type="match status" value="1"/>
</dbReference>
<gene>
    <name evidence="13" type="primary">egl-46</name>
    <name evidence="13" type="ORF">K11G9.4</name>
</gene>
<evidence type="ECO:0000255" key="1">
    <source>
        <dbReference type="PROSITE-ProRule" id="PRU00042"/>
    </source>
</evidence>
<evidence type="ECO:0000269" key="2">
    <source>
    </source>
</evidence>
<evidence type="ECO:0000269" key="3">
    <source>
    </source>
</evidence>
<evidence type="ECO:0000269" key="4">
    <source>
    </source>
</evidence>
<evidence type="ECO:0000269" key="5">
    <source>
    </source>
</evidence>
<evidence type="ECO:0000269" key="6">
    <source>
    </source>
</evidence>
<evidence type="ECO:0000269" key="7">
    <source>
    </source>
</evidence>
<evidence type="ECO:0000269" key="8">
    <source>
    </source>
</evidence>
<evidence type="ECO:0000305" key="9"/>
<evidence type="ECO:0000305" key="10">
    <source>
    </source>
</evidence>
<evidence type="ECO:0000312" key="11">
    <source>
        <dbReference type="EMBL" id="AAG13398.1"/>
    </source>
</evidence>
<evidence type="ECO:0000312" key="12">
    <source>
        <dbReference type="Proteomes" id="UP000001940"/>
    </source>
</evidence>
<evidence type="ECO:0000312" key="13">
    <source>
        <dbReference type="WormBase" id="K11G9.4"/>
    </source>
</evidence>
<keyword id="KW-0131">Cell cycle</keyword>
<keyword id="KW-0221">Differentiation</keyword>
<keyword id="KW-0479">Metal-binding</keyword>
<keyword id="KW-0524">Neurogenesis</keyword>
<keyword id="KW-0539">Nucleus</keyword>
<keyword id="KW-1185">Reference proteome</keyword>
<keyword id="KW-0677">Repeat</keyword>
<keyword id="KW-0804">Transcription</keyword>
<keyword id="KW-0805">Transcription regulation</keyword>
<keyword id="KW-0862">Zinc</keyword>
<keyword id="KW-0863">Zinc-finger</keyword>
<proteinExistence type="evidence at protein level"/>
<sequence length="286" mass="32473">MVPMNDFWVKAILSSTNPSPVPSTTSTVSNDENLDKTLDFDCSTQTVFPTLPMFWNPTLVQQMLALYQIQQQQIQFSAKLAPQPLFQEPTIQKEFLPFPHQSRKRPLPIDPKKTKLRKLNEDTVTSSPVSGMFIKEEADVKSVEELQKEADLLDETAAYVEVTEESRQKIDEIPNVIGDCICRLCKVKYEDVFKLAQHKCPRIAHEEYKCPDCDKVFSCPANLASHRRWHKPRNELGGSPPAQSSTIVSCSTCFNSFPTKKMLKLHSSTCQRSPLQDLLSRVIPTM</sequence>
<accession>G5EFY4</accession>
<organism evidence="12">
    <name type="scientific">Caenorhabditis elegans</name>
    <dbReference type="NCBI Taxonomy" id="6239"/>
    <lineage>
        <taxon>Eukaryota</taxon>
        <taxon>Metazoa</taxon>
        <taxon>Ecdysozoa</taxon>
        <taxon>Nematoda</taxon>
        <taxon>Chromadorea</taxon>
        <taxon>Rhabditida</taxon>
        <taxon>Rhabditina</taxon>
        <taxon>Rhabditomorpha</taxon>
        <taxon>Rhabditoidea</taxon>
        <taxon>Rhabditidae</taxon>
        <taxon>Peloderinae</taxon>
        <taxon>Caenorhabditis</taxon>
    </lineage>
</organism>
<protein>
    <recommendedName>
        <fullName evidence="9">Transcription factor egl-46</fullName>
    </recommendedName>
    <alternativeName>
        <fullName evidence="13">Egg-laying defective protein 46</fullName>
    </alternativeName>
</protein>
<feature type="chain" id="PRO_0000454783" description="Transcription factor egl-46">
    <location>
        <begin position="1"/>
        <end position="286"/>
    </location>
</feature>
<feature type="zinc finger region" description="C2H2-type 1; atypical" evidence="10">
    <location>
        <begin position="180"/>
        <end position="200"/>
    </location>
</feature>
<feature type="zinc finger region" description="C2H2-type 2" evidence="1">
    <location>
        <begin position="208"/>
        <end position="230"/>
    </location>
</feature>
<feature type="zinc finger region" description="C2H2-type 3" evidence="10">
    <location>
        <begin position="248"/>
        <end position="271"/>
    </location>
</feature>
<feature type="mutagenesis site" description="In sy628; decreased mating efficiency in males, as a result of deficiency in vulval location. Abolishes expression of ceh-26, lov-1, and dramatically reduces expression of pkd-2 and nlp-8, in the HOB neuron of homozygous males. Has a mild egg-laying defect." evidence="3">
    <location>
        <begin position="55"/>
        <end position="286"/>
    </location>
</feature>
<feature type="mutagenesis site" description="In cas36; production of an extra neuron from the Q lineage." evidence="5">
    <location>
        <begin position="101"/>
        <end position="286"/>
    </location>
</feature>
<feature type="mutagenesis site" description="In rp15; egg-laying defective and partial loss of expression of guanylyl cyclase gcy-33." evidence="6">
    <location>
        <begin position="117"/>
        <end position="286"/>
    </location>
</feature>
<feature type="mutagenesis site" description="In n1126; defective hermaphrodite specific neurons (HSN)." evidence="2">
    <original>C</original>
    <variation>F</variation>
    <location>
        <position position="200"/>
    </location>
</feature>
<reference evidence="12" key="1">
    <citation type="journal article" date="1998" name="Science">
        <title>Genome sequence of the nematode C. elegans: a platform for investigating biology.</title>
        <authorList>
            <consortium name="The C. elegans sequencing consortium"/>
        </authorList>
    </citation>
    <scope>NUCLEOTIDE SEQUENCE [LARGE SCALE GENOMIC DNA]</scope>
    <source>
        <strain evidence="12">Bristol N2</strain>
    </source>
</reference>
<reference evidence="11" key="2">
    <citation type="submission" date="2000-06" db="EMBL/GenBank/DDBJ databases">
        <title>Inhibition of Touch Cell Fate in C. elegans.</title>
        <authorList>
            <person name="Wu J."/>
            <person name="Duggan A."/>
            <person name="Chalfie M."/>
        </authorList>
    </citation>
    <scope>NUCLEOTIDE SEQUENCE [GENOMIC DNA]</scope>
</reference>
<reference evidence="9" key="3">
    <citation type="journal article" date="2001" name="Genes Dev.">
        <title>Inhibition of touch cell fate by egl-44 and egl-46 in C. elegans.</title>
        <authorList>
            <person name="Wu J."/>
            <person name="Duggan A."/>
            <person name="Chalfie M."/>
        </authorList>
    </citation>
    <scope>FUNCTION</scope>
    <scope>SUBCELLULAR LOCATION</scope>
    <scope>TISSUE SPECIFICITY</scope>
    <scope>DEVELOPMENTAL STAGE</scope>
    <scope>MUTAGENESIS OF CYS-200</scope>
</reference>
<reference evidence="9" key="4">
    <citation type="journal article" date="2003" name="Development">
        <title>Distinct roles of transcription factors EGL-46 and DAF-19 in specifying the functionality of a polycystin-expressing sensory neuron necessary for C. elegans male vulva location behavior.</title>
        <authorList>
            <person name="Yu H."/>
            <person name="Pretot R.F."/>
            <person name="Burglin T.R."/>
            <person name="Sternberg P.W."/>
        </authorList>
    </citation>
    <scope>FUNCTION</scope>
    <scope>DEVELOPMENTAL STAGE</scope>
    <scope>MUTAGENESIS OF 55-TRP--MET-286</scope>
</reference>
<reference evidence="9" key="5">
    <citation type="journal article" date="2010" name="Genetics">
        <title>Functional specialization of sensory cilia by an RFX transcription factor isoform.</title>
        <authorList>
            <person name="Wang J."/>
            <person name="Schwartz H.T."/>
            <person name="Barr M.M."/>
        </authorList>
    </citation>
    <scope>FUNCTION</scope>
</reference>
<reference evidence="9" key="6">
    <citation type="journal article" date="2013" name="Development">
        <title>Developmental stage-dependent transcriptional regulatory pathways control neuroblast lineage progression.</title>
        <authorList>
            <person name="Feng G."/>
            <person name="Yi P."/>
            <person name="Yang Y."/>
            <person name="Chai Y."/>
            <person name="Tian D."/>
            <person name="Zhu Z."/>
            <person name="Liu J."/>
            <person name="Zhou F."/>
            <person name="Cheng Z."/>
            <person name="Wang X."/>
            <person name="Li W."/>
            <person name="Ou G."/>
        </authorList>
    </citation>
    <scope>FUNCTION</scope>
    <scope>INTERACTION WITH EGL-44</scope>
    <scope>SUBCELLULAR LOCATION</scope>
    <scope>DEVELOPMENTAL STAGE</scope>
    <scope>MUTAGENESIS OF 101-GLN--MET-286</scope>
</reference>
<reference evidence="9" key="7">
    <citation type="journal article" date="2015" name="Genetics">
        <title>A novel role for the zinc-finger transcription factor EGL-46 in the differentiation of gas-sensing neurons in Caenorhabditis elegans.</title>
        <authorList>
            <person name="Rojo Romanos T."/>
            <person name="Petersen J.G."/>
            <person name="Riveiro A.R."/>
            <person name="Pocock R."/>
        </authorList>
    </citation>
    <scope>FUNCTION</scope>
    <scope>DEVELOPMENTAL STAGE</scope>
    <scope>MUTAGENESIS OF 117-ARG--MET-286</scope>
</reference>
<reference evidence="9" key="8">
    <citation type="journal article" date="2017" name="Dev. Biol.">
        <title>Separate transcriptionally regulated pathways specify distinct classes of sister dendrites in a nociceptive neuron.</title>
        <authorList>
            <person name="O'Brien B.M.J."/>
            <person name="Palumbos S.D."/>
            <person name="Novakovic M."/>
            <person name="Shang X."/>
            <person name="Sundararajan L."/>
            <person name="Miller D.M. III"/>
        </authorList>
    </citation>
    <scope>FUNCTION</scope>
</reference>
<reference evidence="9" key="9">
    <citation type="journal article" date="2018" name="Development">
        <title>Inhibition of cell fate repressors secures the differentiation of the touch receptor neurons of Caenorhabditis elegans.</title>
        <authorList>
            <person name="Zheng C."/>
            <person name="Jin F.Q."/>
            <person name="Trippe B.L."/>
            <person name="Wu J."/>
            <person name="Chalfie M."/>
        </authorList>
    </citation>
    <scope>FUNCTION</scope>
    <scope>INTERACTION WITH EGL-44</scope>
</reference>
<comment type="function">
    <text evidence="2 3 4 5 6 7 8">Transcription factor (PubMed:30291162). Represses expression of genes involved in differentiation of touch receptor neurons (TRN), probably acting as a heterodimer with egl-44, perhaps by occupying similar cis-regulatory elements as an unc-86/mec-3 heterodimer (PubMed:30291162). Plays a role in cell fate specification of neurons, including the hook neuron HOB, the gas-sensing neuron BAG and touch receptor neurons (PubMed:12954713, PubMed:25395666, PubMed:30291162). Plays a role in neuron differentiation by repressing the expression of zag-1 in FLP neurons, probably acting as a heterodimer with egl-44; because zag-1 represses expression of egl-46 and egl-44, together these proteins form a bistable, negative-feedback loop that regulates the choice between neuronal fates (PubMed:30291162). Acts downstream of egl-44 to prevent touch cell differentiation in FLP neurons (PubMed:11274062). Involved in male mating behavior, acting in concert with egl-44, via modulation of expression of polycystins lov-1 and pkd-2, homeodomain protein ceh-26, and neuropeptide-like protein nlp-8 (PubMed:12954713). Modulates the expression of a subset of terminal differentiation genes involved in O(2)- and CO(2)-sensing, acting in parallel to ets-5 and egl-13 (PubMed:25395666). May act upstream of RFX transcription factor daf-19 to regulate gene expression specifically in the HOB neuron (PubMed:20923979). Plays a role in specifying commissural dendrites of the PVD nociceptive neurons, acting in concert with egl-44 (PubMed:29031632). In association with egl-44, regulates cell cycle exit in the neuronal Q cell lineage (PubMed:23946438).</text>
</comment>
<comment type="subunit">
    <text evidence="5 8">Interacts (via C-terminus) with egl-44 (via N-terminus); the interaction is direct; the interaction may regulate transcription.</text>
</comment>
<comment type="subcellular location">
    <subcellularLocation>
        <location evidence="2 5">Nucleus</location>
    </subcellularLocation>
    <text evidence="5">Localized to nucleus during interphase and evenly distributed in the cytoplasm of dividing Q.a and Q.p neuroblasts.</text>
</comment>
<comment type="tissue specificity">
    <text evidence="2">Expressed in touch cells, HSN cells, ventral cord motor neurons and ciliated ray neurons.</text>
</comment>
<comment type="developmental stage">
    <text evidence="2 3 5 6">Expressed in neuronal cells, initially in embryos after gastrulation, including ventral cord motor neurons during the L1 larval stage, FLP, AVM and HSB neurons during L2, and PVM neurons during L3 (PubMed:11274062, PubMed:12954713). Expressed in the BAG neurons at the L2 and L3 stages of larval development (PubMed:25395666). Expressed in the HOB neuron beginning at the larval L4 stage and continuing throughout adulthood (PubMed:12954713). Expressed in the Q neuroblast lineage during larval development (PubMed:11274062, PubMed:23946438).</text>
</comment>
<comment type="similarity">
    <text evidence="9">Belongs to the INSM1 family.</text>
</comment>
<name>EGL46_CAEEL</name>